<name>Y2910_ARATH</name>
<gene>
    <name type="ordered locus">At3g02910</name>
    <name type="ORF">F13E7.14</name>
</gene>
<sequence>MGHETMTPATTTLVFTYGTLKRGFSNHVLMQDLIRSGDASFKGVYQTLDKYPLVCGPYRVPFLLNKPGSGYHVNGELYAVSPRGLSRLDELEGISRGHYIRQPIRLAAAEEEEEEEGDLETEAPSSCVVEAYYAHKSYEEELWRRNRGRSFGAYTENEARGYVKRNDRPQHLSFLDHIRIFVSSPCD</sequence>
<accession>Q9M8T3</accession>
<accession>Q8LCA5</accession>
<accession>Q8VZJ3</accession>
<protein>
    <recommendedName>
        <fullName>Putative gamma-glutamylcyclotransferase At3g02910</fullName>
        <ecNumber>2.3.2.-</ecNumber>
    </recommendedName>
</protein>
<reference key="1">
    <citation type="journal article" date="2000" name="Nature">
        <title>Sequence and analysis of chromosome 3 of the plant Arabidopsis thaliana.</title>
        <authorList>
            <person name="Salanoubat M."/>
            <person name="Lemcke K."/>
            <person name="Rieger M."/>
            <person name="Ansorge W."/>
            <person name="Unseld M."/>
            <person name="Fartmann B."/>
            <person name="Valle G."/>
            <person name="Bloecker H."/>
            <person name="Perez-Alonso M."/>
            <person name="Obermaier B."/>
            <person name="Delseny M."/>
            <person name="Boutry M."/>
            <person name="Grivell L.A."/>
            <person name="Mache R."/>
            <person name="Puigdomenech P."/>
            <person name="De Simone V."/>
            <person name="Choisne N."/>
            <person name="Artiguenave F."/>
            <person name="Robert C."/>
            <person name="Brottier P."/>
            <person name="Wincker P."/>
            <person name="Cattolico L."/>
            <person name="Weissenbach J."/>
            <person name="Saurin W."/>
            <person name="Quetier F."/>
            <person name="Schaefer M."/>
            <person name="Mueller-Auer S."/>
            <person name="Gabel C."/>
            <person name="Fuchs M."/>
            <person name="Benes V."/>
            <person name="Wurmbach E."/>
            <person name="Drzonek H."/>
            <person name="Erfle H."/>
            <person name="Jordan N."/>
            <person name="Bangert S."/>
            <person name="Wiedelmann R."/>
            <person name="Kranz H."/>
            <person name="Voss H."/>
            <person name="Holland R."/>
            <person name="Brandt P."/>
            <person name="Nyakatura G."/>
            <person name="Vezzi A."/>
            <person name="D'Angelo M."/>
            <person name="Pallavicini A."/>
            <person name="Toppo S."/>
            <person name="Simionati B."/>
            <person name="Conrad A."/>
            <person name="Hornischer K."/>
            <person name="Kauer G."/>
            <person name="Loehnert T.-H."/>
            <person name="Nordsiek G."/>
            <person name="Reichelt J."/>
            <person name="Scharfe M."/>
            <person name="Schoen O."/>
            <person name="Bargues M."/>
            <person name="Terol J."/>
            <person name="Climent J."/>
            <person name="Navarro P."/>
            <person name="Collado C."/>
            <person name="Perez-Perez A."/>
            <person name="Ottenwaelder B."/>
            <person name="Duchemin D."/>
            <person name="Cooke R."/>
            <person name="Laudie M."/>
            <person name="Berger-Llauro C."/>
            <person name="Purnelle B."/>
            <person name="Masuy D."/>
            <person name="de Haan M."/>
            <person name="Maarse A.C."/>
            <person name="Alcaraz J.-P."/>
            <person name="Cottet A."/>
            <person name="Casacuberta E."/>
            <person name="Monfort A."/>
            <person name="Argiriou A."/>
            <person name="Flores M."/>
            <person name="Liguori R."/>
            <person name="Vitale D."/>
            <person name="Mannhaupt G."/>
            <person name="Haase D."/>
            <person name="Schoof H."/>
            <person name="Rudd S."/>
            <person name="Zaccaria P."/>
            <person name="Mewes H.-W."/>
            <person name="Mayer K.F.X."/>
            <person name="Kaul S."/>
            <person name="Town C.D."/>
            <person name="Koo H.L."/>
            <person name="Tallon L.J."/>
            <person name="Jenkins J."/>
            <person name="Rooney T."/>
            <person name="Rizzo M."/>
            <person name="Walts A."/>
            <person name="Utterback T."/>
            <person name="Fujii C.Y."/>
            <person name="Shea T.P."/>
            <person name="Creasy T.H."/>
            <person name="Haas B."/>
            <person name="Maiti R."/>
            <person name="Wu D."/>
            <person name="Peterson J."/>
            <person name="Van Aken S."/>
            <person name="Pai G."/>
            <person name="Militscher J."/>
            <person name="Sellers P."/>
            <person name="Gill J.E."/>
            <person name="Feldblyum T.V."/>
            <person name="Preuss D."/>
            <person name="Lin X."/>
            <person name="Nierman W.C."/>
            <person name="Salzberg S.L."/>
            <person name="White O."/>
            <person name="Venter J.C."/>
            <person name="Fraser C.M."/>
            <person name="Kaneko T."/>
            <person name="Nakamura Y."/>
            <person name="Sato S."/>
            <person name="Kato T."/>
            <person name="Asamizu E."/>
            <person name="Sasamoto S."/>
            <person name="Kimura T."/>
            <person name="Idesawa K."/>
            <person name="Kawashima K."/>
            <person name="Kishida Y."/>
            <person name="Kiyokawa C."/>
            <person name="Kohara M."/>
            <person name="Matsumoto M."/>
            <person name="Matsuno A."/>
            <person name="Muraki A."/>
            <person name="Nakayama S."/>
            <person name="Nakazaki N."/>
            <person name="Shinpo S."/>
            <person name="Takeuchi C."/>
            <person name="Wada T."/>
            <person name="Watanabe A."/>
            <person name="Yamada M."/>
            <person name="Yasuda M."/>
            <person name="Tabata S."/>
        </authorList>
    </citation>
    <scope>NUCLEOTIDE SEQUENCE [LARGE SCALE GENOMIC DNA]</scope>
    <source>
        <strain>cv. Columbia</strain>
    </source>
</reference>
<reference key="2">
    <citation type="journal article" date="2017" name="Plant J.">
        <title>Araport11: a complete reannotation of the Arabidopsis thaliana reference genome.</title>
        <authorList>
            <person name="Cheng C.Y."/>
            <person name="Krishnakumar V."/>
            <person name="Chan A.P."/>
            <person name="Thibaud-Nissen F."/>
            <person name="Schobel S."/>
            <person name="Town C.D."/>
        </authorList>
    </citation>
    <scope>GENOME REANNOTATION</scope>
    <source>
        <strain>cv. Columbia</strain>
    </source>
</reference>
<reference key="3">
    <citation type="journal article" date="2003" name="Science">
        <title>Empirical analysis of transcriptional activity in the Arabidopsis genome.</title>
        <authorList>
            <person name="Yamada K."/>
            <person name="Lim J."/>
            <person name="Dale J.M."/>
            <person name="Chen H."/>
            <person name="Shinn P."/>
            <person name="Palm C.J."/>
            <person name="Southwick A.M."/>
            <person name="Wu H.C."/>
            <person name="Kim C.J."/>
            <person name="Nguyen M."/>
            <person name="Pham P.K."/>
            <person name="Cheuk R.F."/>
            <person name="Karlin-Newmann G."/>
            <person name="Liu S.X."/>
            <person name="Lam B."/>
            <person name="Sakano H."/>
            <person name="Wu T."/>
            <person name="Yu G."/>
            <person name="Miranda M."/>
            <person name="Quach H.L."/>
            <person name="Tripp M."/>
            <person name="Chang C.H."/>
            <person name="Lee J.M."/>
            <person name="Toriumi M.J."/>
            <person name="Chan M.M."/>
            <person name="Tang C.C."/>
            <person name="Onodera C.S."/>
            <person name="Deng J.M."/>
            <person name="Akiyama K."/>
            <person name="Ansari Y."/>
            <person name="Arakawa T."/>
            <person name="Banh J."/>
            <person name="Banno F."/>
            <person name="Bowser L."/>
            <person name="Brooks S.Y."/>
            <person name="Carninci P."/>
            <person name="Chao Q."/>
            <person name="Choy N."/>
            <person name="Enju A."/>
            <person name="Goldsmith A.D."/>
            <person name="Gurjal M."/>
            <person name="Hansen N.F."/>
            <person name="Hayashizaki Y."/>
            <person name="Johnson-Hopson C."/>
            <person name="Hsuan V.W."/>
            <person name="Iida K."/>
            <person name="Karnes M."/>
            <person name="Khan S."/>
            <person name="Koesema E."/>
            <person name="Ishida J."/>
            <person name="Jiang P.X."/>
            <person name="Jones T."/>
            <person name="Kawai J."/>
            <person name="Kamiya A."/>
            <person name="Meyers C."/>
            <person name="Nakajima M."/>
            <person name="Narusaka M."/>
            <person name="Seki M."/>
            <person name="Sakurai T."/>
            <person name="Satou M."/>
            <person name="Tamse R."/>
            <person name="Vaysberg M."/>
            <person name="Wallender E.K."/>
            <person name="Wong C."/>
            <person name="Yamamura Y."/>
            <person name="Yuan S."/>
            <person name="Shinozaki K."/>
            <person name="Davis R.W."/>
            <person name="Theologis A."/>
            <person name="Ecker J.R."/>
        </authorList>
    </citation>
    <scope>NUCLEOTIDE SEQUENCE [LARGE SCALE MRNA]</scope>
    <source>
        <strain>cv. Columbia</strain>
    </source>
</reference>
<reference key="4">
    <citation type="submission" date="2002-03" db="EMBL/GenBank/DDBJ databases">
        <title>Full-length cDNA from Arabidopsis thaliana.</title>
        <authorList>
            <person name="Brover V.V."/>
            <person name="Troukhan M.E."/>
            <person name="Alexandrov N.A."/>
            <person name="Lu Y.-P."/>
            <person name="Flavell R.B."/>
            <person name="Feldmann K.A."/>
        </authorList>
    </citation>
    <scope>NUCLEOTIDE SEQUENCE [LARGE SCALE MRNA]</scope>
</reference>
<comment type="function">
    <text evidence="1">Putative gamma-glutamylcyclotransferase.</text>
</comment>
<comment type="similarity">
    <text evidence="2">Belongs to the gamma-glutamylcyclotransferase family.</text>
</comment>
<comment type="sequence caution" evidence="2">
    <conflict type="erroneous initiation">
        <sequence resource="EMBL-CDS" id="AAF26968"/>
    </conflict>
    <text>Truncated N-terminus.</text>
</comment>
<keyword id="KW-0012">Acyltransferase</keyword>
<keyword id="KW-1185">Reference proteome</keyword>
<keyword id="KW-0808">Transferase</keyword>
<evidence type="ECO:0000250" key="1"/>
<evidence type="ECO:0000305" key="2"/>
<organism>
    <name type="scientific">Arabidopsis thaliana</name>
    <name type="common">Mouse-ear cress</name>
    <dbReference type="NCBI Taxonomy" id="3702"/>
    <lineage>
        <taxon>Eukaryota</taxon>
        <taxon>Viridiplantae</taxon>
        <taxon>Streptophyta</taxon>
        <taxon>Embryophyta</taxon>
        <taxon>Tracheophyta</taxon>
        <taxon>Spermatophyta</taxon>
        <taxon>Magnoliopsida</taxon>
        <taxon>eudicotyledons</taxon>
        <taxon>Gunneridae</taxon>
        <taxon>Pentapetalae</taxon>
        <taxon>rosids</taxon>
        <taxon>malvids</taxon>
        <taxon>Brassicales</taxon>
        <taxon>Brassicaceae</taxon>
        <taxon>Camelineae</taxon>
        <taxon>Arabidopsis</taxon>
    </lineage>
</organism>
<dbReference type="EC" id="2.3.2.-"/>
<dbReference type="EMBL" id="AC018363">
    <property type="protein sequence ID" value="AAF26968.1"/>
    <property type="status" value="ALT_INIT"/>
    <property type="molecule type" value="Genomic_DNA"/>
</dbReference>
<dbReference type="EMBL" id="CP002686">
    <property type="protein sequence ID" value="AEE73878.1"/>
    <property type="molecule type" value="Genomic_DNA"/>
</dbReference>
<dbReference type="EMBL" id="AY064129">
    <property type="protein sequence ID" value="AAL36037.1"/>
    <property type="molecule type" value="mRNA"/>
</dbReference>
<dbReference type="EMBL" id="AY120704">
    <property type="protein sequence ID" value="AAM52247.1"/>
    <property type="molecule type" value="mRNA"/>
</dbReference>
<dbReference type="EMBL" id="AY086705">
    <property type="protein sequence ID" value="AAM63759.1"/>
    <property type="molecule type" value="mRNA"/>
</dbReference>
<dbReference type="RefSeq" id="NP_566187.1">
    <property type="nucleotide sequence ID" value="NM_111161.2"/>
</dbReference>
<dbReference type="SMR" id="Q9M8T3"/>
<dbReference type="BioGRID" id="6522">
    <property type="interactions" value="1"/>
</dbReference>
<dbReference type="FunCoup" id="Q9M8T3">
    <property type="interactions" value="238"/>
</dbReference>
<dbReference type="STRING" id="3702.Q9M8T3"/>
<dbReference type="PaxDb" id="3702-AT3G02910.1"/>
<dbReference type="ProteomicsDB" id="232352"/>
<dbReference type="EnsemblPlants" id="AT3G02910.1">
    <property type="protein sequence ID" value="AT3G02910.1"/>
    <property type="gene ID" value="AT3G02910"/>
</dbReference>
<dbReference type="GeneID" id="821189"/>
<dbReference type="Gramene" id="AT3G02910.1">
    <property type="protein sequence ID" value="AT3G02910.1"/>
    <property type="gene ID" value="AT3G02910"/>
</dbReference>
<dbReference type="KEGG" id="ath:AT3G02910"/>
<dbReference type="Araport" id="AT3G02910"/>
<dbReference type="TAIR" id="AT3G02910"/>
<dbReference type="eggNOG" id="KOG4450">
    <property type="taxonomic scope" value="Eukaryota"/>
</dbReference>
<dbReference type="HOGENOM" id="CLU_083466_0_1_1"/>
<dbReference type="InParanoid" id="Q9M8T3"/>
<dbReference type="OMA" id="RGFSNHC"/>
<dbReference type="PhylomeDB" id="Q9M8T3"/>
<dbReference type="PRO" id="PR:Q9M8T3"/>
<dbReference type="Proteomes" id="UP000006548">
    <property type="component" value="Chromosome 3"/>
</dbReference>
<dbReference type="ExpressionAtlas" id="Q9M8T3">
    <property type="expression patterns" value="baseline and differential"/>
</dbReference>
<dbReference type="GO" id="GO:0016746">
    <property type="term" value="F:acyltransferase activity"/>
    <property type="evidence" value="ECO:0007669"/>
    <property type="project" value="UniProtKB-KW"/>
</dbReference>
<dbReference type="GO" id="GO:0061929">
    <property type="term" value="F:gamma-glutamylaminecyclotransferase activity"/>
    <property type="evidence" value="ECO:0007669"/>
    <property type="project" value="InterPro"/>
</dbReference>
<dbReference type="CDD" id="cd06661">
    <property type="entry name" value="GGCT_like"/>
    <property type="match status" value="1"/>
</dbReference>
<dbReference type="FunFam" id="3.10.490.10:FF:000009">
    <property type="entry name" value="Putative gamma-glutamylcyclotransferase"/>
    <property type="match status" value="1"/>
</dbReference>
<dbReference type="Gene3D" id="3.10.490.10">
    <property type="entry name" value="Gamma-glutamyl cyclotransferase-like"/>
    <property type="match status" value="1"/>
</dbReference>
<dbReference type="InterPro" id="IPR009288">
    <property type="entry name" value="AIG2-like_dom"/>
</dbReference>
<dbReference type="InterPro" id="IPR039126">
    <property type="entry name" value="GGACT"/>
</dbReference>
<dbReference type="InterPro" id="IPR013024">
    <property type="entry name" value="GGCT-like"/>
</dbReference>
<dbReference type="InterPro" id="IPR036568">
    <property type="entry name" value="GGCT-like_sf"/>
</dbReference>
<dbReference type="PANTHER" id="PTHR12510:SF4">
    <property type="entry name" value="GAMMA-GLUTAMYLAMINECYCLOTRANSFERASE"/>
    <property type="match status" value="1"/>
</dbReference>
<dbReference type="PANTHER" id="PTHR12510">
    <property type="entry name" value="TROPONIN C-AKIN-1 PROTEIN"/>
    <property type="match status" value="1"/>
</dbReference>
<dbReference type="Pfam" id="PF06094">
    <property type="entry name" value="GGACT"/>
    <property type="match status" value="1"/>
</dbReference>
<dbReference type="SUPFAM" id="SSF110857">
    <property type="entry name" value="Gamma-glutamyl cyclotransferase-like"/>
    <property type="match status" value="1"/>
</dbReference>
<proteinExistence type="evidence at transcript level"/>
<feature type="chain" id="PRO_0000184786" description="Putative gamma-glutamylcyclotransferase At3g02910">
    <location>
        <begin position="1"/>
        <end position="187"/>
    </location>
</feature>
<feature type="active site" description="Proton acceptor" evidence="1">
    <location>
        <position position="92"/>
    </location>
</feature>
<feature type="binding site" evidence="1">
    <location>
        <begin position="17"/>
        <end position="20"/>
    </location>
    <ligand>
        <name>substrate</name>
    </ligand>
</feature>
<feature type="sequence conflict" description="In Ref. 4; AAM63759." evidence="2" ref="4">
    <original>N</original>
    <variation>T</variation>
    <location>
        <position position="74"/>
    </location>
</feature>
<feature type="sequence conflict" description="In Ref. 4; AAM63759." evidence="2" ref="4">
    <original>R</original>
    <variation>K</variation>
    <location>
        <position position="144"/>
    </location>
</feature>